<keyword id="KW-0687">Ribonucleoprotein</keyword>
<keyword id="KW-0689">Ribosomal protein</keyword>
<accession>B2UEM0</accession>
<dbReference type="EMBL" id="CP001068">
    <property type="protein sequence ID" value="ACD28420.1"/>
    <property type="molecule type" value="Genomic_DNA"/>
</dbReference>
<dbReference type="SMR" id="B2UEM0"/>
<dbReference type="STRING" id="402626.Rpic_3298"/>
<dbReference type="KEGG" id="rpi:Rpic_3298"/>
<dbReference type="eggNOG" id="COG0051">
    <property type="taxonomic scope" value="Bacteria"/>
</dbReference>
<dbReference type="HOGENOM" id="CLU_122625_1_3_4"/>
<dbReference type="GO" id="GO:1990904">
    <property type="term" value="C:ribonucleoprotein complex"/>
    <property type="evidence" value="ECO:0007669"/>
    <property type="project" value="UniProtKB-KW"/>
</dbReference>
<dbReference type="GO" id="GO:0005840">
    <property type="term" value="C:ribosome"/>
    <property type="evidence" value="ECO:0007669"/>
    <property type="project" value="UniProtKB-KW"/>
</dbReference>
<dbReference type="GO" id="GO:0003735">
    <property type="term" value="F:structural constituent of ribosome"/>
    <property type="evidence" value="ECO:0007669"/>
    <property type="project" value="InterPro"/>
</dbReference>
<dbReference type="GO" id="GO:0000049">
    <property type="term" value="F:tRNA binding"/>
    <property type="evidence" value="ECO:0007669"/>
    <property type="project" value="UniProtKB-UniRule"/>
</dbReference>
<dbReference type="GO" id="GO:0006412">
    <property type="term" value="P:translation"/>
    <property type="evidence" value="ECO:0007669"/>
    <property type="project" value="UniProtKB-UniRule"/>
</dbReference>
<dbReference type="FunFam" id="3.30.70.600:FF:000001">
    <property type="entry name" value="30S ribosomal protein S10"/>
    <property type="match status" value="1"/>
</dbReference>
<dbReference type="Gene3D" id="3.30.70.600">
    <property type="entry name" value="Ribosomal protein S10 domain"/>
    <property type="match status" value="1"/>
</dbReference>
<dbReference type="HAMAP" id="MF_00508">
    <property type="entry name" value="Ribosomal_uS10"/>
    <property type="match status" value="1"/>
</dbReference>
<dbReference type="InterPro" id="IPR001848">
    <property type="entry name" value="Ribosomal_uS10"/>
</dbReference>
<dbReference type="InterPro" id="IPR018268">
    <property type="entry name" value="Ribosomal_uS10_CS"/>
</dbReference>
<dbReference type="InterPro" id="IPR027486">
    <property type="entry name" value="Ribosomal_uS10_dom"/>
</dbReference>
<dbReference type="InterPro" id="IPR036838">
    <property type="entry name" value="Ribosomal_uS10_dom_sf"/>
</dbReference>
<dbReference type="NCBIfam" id="NF001861">
    <property type="entry name" value="PRK00596.1"/>
    <property type="match status" value="1"/>
</dbReference>
<dbReference type="NCBIfam" id="TIGR01049">
    <property type="entry name" value="rpsJ_bact"/>
    <property type="match status" value="1"/>
</dbReference>
<dbReference type="PANTHER" id="PTHR11700">
    <property type="entry name" value="30S RIBOSOMAL PROTEIN S10 FAMILY MEMBER"/>
    <property type="match status" value="1"/>
</dbReference>
<dbReference type="Pfam" id="PF00338">
    <property type="entry name" value="Ribosomal_S10"/>
    <property type="match status" value="1"/>
</dbReference>
<dbReference type="PRINTS" id="PR00971">
    <property type="entry name" value="RIBOSOMALS10"/>
</dbReference>
<dbReference type="SMART" id="SM01403">
    <property type="entry name" value="Ribosomal_S10"/>
    <property type="match status" value="1"/>
</dbReference>
<dbReference type="SUPFAM" id="SSF54999">
    <property type="entry name" value="Ribosomal protein S10"/>
    <property type="match status" value="1"/>
</dbReference>
<dbReference type="PROSITE" id="PS00361">
    <property type="entry name" value="RIBOSOMAL_S10"/>
    <property type="match status" value="1"/>
</dbReference>
<protein>
    <recommendedName>
        <fullName evidence="1">Small ribosomal subunit protein uS10</fullName>
    </recommendedName>
    <alternativeName>
        <fullName evidence="2">30S ribosomal protein S10</fullName>
    </alternativeName>
</protein>
<sequence>MQNQKIRIRLKAFDYRLIDQSAAEIVETAKRTGAIVKGPVPLPTRIQRFDVLRSPHVNKTSRDQFEIRTHQRLMDIVDPTDKTVDALMKLDLPAGVDVEIKLQ</sequence>
<feature type="chain" id="PRO_1000127170" description="Small ribosomal subunit protein uS10">
    <location>
        <begin position="1"/>
        <end position="103"/>
    </location>
</feature>
<organism>
    <name type="scientific">Ralstonia pickettii (strain 12J)</name>
    <dbReference type="NCBI Taxonomy" id="402626"/>
    <lineage>
        <taxon>Bacteria</taxon>
        <taxon>Pseudomonadati</taxon>
        <taxon>Pseudomonadota</taxon>
        <taxon>Betaproteobacteria</taxon>
        <taxon>Burkholderiales</taxon>
        <taxon>Burkholderiaceae</taxon>
        <taxon>Ralstonia</taxon>
    </lineage>
</organism>
<reference key="1">
    <citation type="submission" date="2008-05" db="EMBL/GenBank/DDBJ databases">
        <title>Complete sequence of chromosome 1 of Ralstonia pickettii 12J.</title>
        <authorList>
            <person name="Lucas S."/>
            <person name="Copeland A."/>
            <person name="Lapidus A."/>
            <person name="Glavina del Rio T."/>
            <person name="Dalin E."/>
            <person name="Tice H."/>
            <person name="Bruce D."/>
            <person name="Goodwin L."/>
            <person name="Pitluck S."/>
            <person name="Meincke L."/>
            <person name="Brettin T."/>
            <person name="Detter J.C."/>
            <person name="Han C."/>
            <person name="Kuske C.R."/>
            <person name="Schmutz J."/>
            <person name="Larimer F."/>
            <person name="Land M."/>
            <person name="Hauser L."/>
            <person name="Kyrpides N."/>
            <person name="Mikhailova N."/>
            <person name="Marsh T."/>
            <person name="Richardson P."/>
        </authorList>
    </citation>
    <scope>NUCLEOTIDE SEQUENCE [LARGE SCALE GENOMIC DNA]</scope>
    <source>
        <strain>12J</strain>
    </source>
</reference>
<gene>
    <name evidence="1" type="primary">rpsJ</name>
    <name type="ordered locus">Rpic_3298</name>
</gene>
<comment type="function">
    <text evidence="1">Involved in the binding of tRNA to the ribosomes.</text>
</comment>
<comment type="subunit">
    <text evidence="1">Part of the 30S ribosomal subunit.</text>
</comment>
<comment type="similarity">
    <text evidence="1">Belongs to the universal ribosomal protein uS10 family.</text>
</comment>
<name>RS10_RALPJ</name>
<proteinExistence type="inferred from homology"/>
<evidence type="ECO:0000255" key="1">
    <source>
        <dbReference type="HAMAP-Rule" id="MF_00508"/>
    </source>
</evidence>
<evidence type="ECO:0000305" key="2"/>